<comment type="function">
    <text evidence="2">Secreted effector that completely suppresses the host cell death induced by cell death-inducing proteins.</text>
</comment>
<comment type="subcellular location">
    <subcellularLocation>
        <location evidence="2">Secreted</location>
    </subcellularLocation>
    <subcellularLocation>
        <location evidence="2">Host nucleus</location>
    </subcellularLocation>
    <subcellularLocation>
        <location evidence="2">Host cytoplasm</location>
    </subcellularLocation>
    <text evidence="2">Localizes to bulk/chunk-like structures within the nucleus.</text>
</comment>
<comment type="domain">
    <text evidence="5">The RxLR-dEER motif acts to carry the protein into the host cell cytoplasm through binding to cell surface phosphatidylinositol-3-phosphate.</text>
</comment>
<comment type="similarity">
    <text evidence="4">Belongs to the RxLR effector family.</text>
</comment>
<reference key="1">
    <citation type="journal article" date="2018" name="Front. Plant Sci.">
        <title>In planta functional analysis and subcellular localization of the oomycete pathogen Plasmopara viticola candidate RXLR effector repertoire.</title>
        <authorList>
            <person name="Liu Y."/>
            <person name="Lan X."/>
            <person name="Song S."/>
            <person name="Yin L."/>
            <person name="Dry I.B."/>
            <person name="Qu J."/>
            <person name="Xiang J."/>
            <person name="Lu J."/>
        </authorList>
    </citation>
    <scope>NUCLEOTIDE SEQUENCE [MRNA]</scope>
    <scope>DOMAIN</scope>
    <scope>FUNCTION</scope>
    <scope>SUBCELLULAR LOCATION</scope>
</reference>
<sequence>MRNGVVLFGLFFIGYSSCVLASLVEKSDVESTHAEQWDSNGKRTLQADDPERILAEERNMEQALLPAAEAIGKIKVSEKAVPRASLGSTLNPMKWPKRILDKVRLWLARIRLNLLKRTTVGEDSIDRAMMNGLTPFYLKKIKNDIMHYSSSVPHDKIKIEEDYDFYVKHFFGQFKGLYKDPPVFAVDKWNKLEEGMTKAEQNGNRRASDKVSRNIDKGLSIDQLFSLDISPFVYMRLLEKRGVFKDVENNMDKIDHLKDYVKVYKEHLMA</sequence>
<evidence type="ECO:0000255" key="1"/>
<evidence type="ECO:0000269" key="2">
    <source>
    </source>
</evidence>
<evidence type="ECO:0000303" key="3">
    <source>
    </source>
</evidence>
<evidence type="ECO:0000305" key="4"/>
<evidence type="ECO:0000305" key="5">
    <source>
    </source>
</evidence>
<name>RL149_PLAVT</name>
<feature type="signal peptide" evidence="1">
    <location>
        <begin position="1"/>
        <end position="21"/>
    </location>
</feature>
<feature type="chain" id="PRO_0000447973" description="Secreted RxLR effector protein 149">
    <location>
        <begin position="22"/>
        <end position="270"/>
    </location>
</feature>
<feature type="short sequence motif" description="RxLR-dEER" evidence="5">
    <location>
        <begin position="43"/>
        <end position="58"/>
    </location>
</feature>
<proteinExistence type="evidence at transcript level"/>
<gene>
    <name evidence="3" type="primary">RXLR149</name>
</gene>
<keyword id="KW-1035">Host cytoplasm</keyword>
<keyword id="KW-1048">Host nucleus</keyword>
<keyword id="KW-0964">Secreted</keyword>
<keyword id="KW-0732">Signal</keyword>
<keyword id="KW-0843">Virulence</keyword>
<protein>
    <recommendedName>
        <fullName evidence="3">Secreted RxLR effector protein 149</fullName>
    </recommendedName>
</protein>
<organism>
    <name type="scientific">Plasmopara viticola</name>
    <name type="common">Downy mildew of grapevine</name>
    <name type="synonym">Botrytis viticola</name>
    <dbReference type="NCBI Taxonomy" id="143451"/>
    <lineage>
        <taxon>Eukaryota</taxon>
        <taxon>Sar</taxon>
        <taxon>Stramenopiles</taxon>
        <taxon>Oomycota</taxon>
        <taxon>Peronosporales</taxon>
        <taxon>Peronosporaceae</taxon>
        <taxon>Plasmopara</taxon>
    </lineage>
</organism>
<accession>P0CV63</accession>
<dbReference type="GO" id="GO:0005576">
    <property type="term" value="C:extracellular region"/>
    <property type="evidence" value="ECO:0007669"/>
    <property type="project" value="UniProtKB-SubCell"/>
</dbReference>
<dbReference type="GO" id="GO:0030430">
    <property type="term" value="C:host cell cytoplasm"/>
    <property type="evidence" value="ECO:0007669"/>
    <property type="project" value="UniProtKB-SubCell"/>
</dbReference>
<dbReference type="GO" id="GO:0042025">
    <property type="term" value="C:host cell nucleus"/>
    <property type="evidence" value="ECO:0007669"/>
    <property type="project" value="UniProtKB-SubCell"/>
</dbReference>